<reference key="1">
    <citation type="journal article" date="2004" name="Science">
        <title>The 1.2-megabase genome sequence of Mimivirus.</title>
        <authorList>
            <person name="Raoult D."/>
            <person name="Audic S."/>
            <person name="Robert C."/>
            <person name="Abergel C."/>
            <person name="Renesto P."/>
            <person name="Ogata H."/>
            <person name="La Scola B."/>
            <person name="Susan M."/>
            <person name="Claverie J.-M."/>
        </authorList>
    </citation>
    <scope>NUCLEOTIDE SEQUENCE [LARGE SCALE GENOMIC DNA]</scope>
    <source>
        <strain>Rowbotham-Bradford</strain>
    </source>
</reference>
<protein>
    <recommendedName>
        <fullName>Uncharacterized protein L320</fullName>
    </recommendedName>
</protein>
<name>YL320_MIMIV</name>
<proteinExistence type="predicted"/>
<organism>
    <name type="scientific">Acanthamoeba polyphaga mimivirus</name>
    <name type="common">APMV</name>
    <dbReference type="NCBI Taxonomy" id="212035"/>
    <lineage>
        <taxon>Viruses</taxon>
        <taxon>Varidnaviria</taxon>
        <taxon>Bamfordvirae</taxon>
        <taxon>Nucleocytoviricota</taxon>
        <taxon>Megaviricetes</taxon>
        <taxon>Imitervirales</taxon>
        <taxon>Mimiviridae</taxon>
        <taxon>Megamimivirinae</taxon>
        <taxon>Mimivirus</taxon>
        <taxon>Mimivirus bradfordmassiliense</taxon>
    </lineage>
</organism>
<sequence length="256" mass="30283">MIIMDYYHMDIILYPNKNLQKSLTKRKCLKQPNIHSIKRLIFPPITETRLSKIMIDDESIKYITYNSSAQEITNIIMNNLENFPCPSHCSEEKWRLKSPDQRMKKLVITEMTAGVGGNVLNFAKYFKYVNAIELNCIRYKYLNNNIKLYDYSNVNCYNDNSVSLLIEKDDLGQDIVFFDPPWGGGGYKQFQNLRLDFDKYSVEVVCQKLLEKNHNKMVILKLPSNYDFDYFFDQLKSYTINKFDIEKMTIIVVKKY</sequence>
<organismHost>
    <name type="scientific">Acanthamoeba polyphaga</name>
    <name type="common">Amoeba</name>
    <dbReference type="NCBI Taxonomy" id="5757"/>
</organismHost>
<feature type="chain" id="PRO_0000253243" description="Uncharacterized protein L320">
    <location>
        <begin position="1"/>
        <end position="256"/>
    </location>
</feature>
<gene>
    <name type="ordered locus">MIMI_L320</name>
</gene>
<accession>Q5UQR2</accession>
<dbReference type="EMBL" id="AY653733">
    <property type="protein sequence ID" value="AAV50589.1"/>
    <property type="molecule type" value="Genomic_DNA"/>
</dbReference>
<dbReference type="SMR" id="Q5UQR2"/>
<dbReference type="KEGG" id="vg:9924937"/>
<dbReference type="OrthoDB" id="14228at10239"/>
<dbReference type="Proteomes" id="UP000001134">
    <property type="component" value="Genome"/>
</dbReference>
<dbReference type="GO" id="GO:0003676">
    <property type="term" value="F:nucleic acid binding"/>
    <property type="evidence" value="ECO:0007669"/>
    <property type="project" value="InterPro"/>
</dbReference>
<dbReference type="GO" id="GO:0071164">
    <property type="term" value="F:RNA cap trimethylguanosine synthase activity"/>
    <property type="evidence" value="ECO:0007669"/>
    <property type="project" value="TreeGrafter"/>
</dbReference>
<dbReference type="Gene3D" id="3.40.50.150">
    <property type="entry name" value="Vaccinia Virus protein VP39"/>
    <property type="match status" value="1"/>
</dbReference>
<dbReference type="InterPro" id="IPR002052">
    <property type="entry name" value="DNA_methylase_N6_adenine_CS"/>
</dbReference>
<dbReference type="InterPro" id="IPR019012">
    <property type="entry name" value="RNA_cap_Gua-N2-MeTrfase"/>
</dbReference>
<dbReference type="InterPro" id="IPR029063">
    <property type="entry name" value="SAM-dependent_MTases_sf"/>
</dbReference>
<dbReference type="PANTHER" id="PTHR14741">
    <property type="entry name" value="S-ADENOSYLMETHIONINE-DEPENDENT METHYLTRANSFERASE RELATED"/>
    <property type="match status" value="1"/>
</dbReference>
<dbReference type="PANTHER" id="PTHR14741:SF32">
    <property type="entry name" value="TRIMETHYLGUANOSINE SYNTHASE"/>
    <property type="match status" value="1"/>
</dbReference>
<dbReference type="Pfam" id="PF09445">
    <property type="entry name" value="Methyltransf_15"/>
    <property type="match status" value="1"/>
</dbReference>
<dbReference type="SUPFAM" id="SSF53335">
    <property type="entry name" value="S-adenosyl-L-methionine-dependent methyltransferases"/>
    <property type="match status" value="1"/>
</dbReference>
<dbReference type="PROSITE" id="PS00092">
    <property type="entry name" value="N6_MTASE"/>
    <property type="match status" value="1"/>
</dbReference>
<keyword id="KW-1185">Reference proteome</keyword>